<gene>
    <name evidence="5 10" type="primary">IGKV5-2</name>
</gene>
<sequence length="115" mass="12728">MGSQVHLLSFLLLWISDTRAETTLTQSPAFMSATPGDKVNISCKASQDIDDDMNWYQQKPGEAAIFIIQEATTLVPGIPPRFSGSGYGTDFTLTINNIESEDAAYYFCLQHDNFP</sequence>
<feature type="signal peptide" evidence="2">
    <location>
        <begin position="1"/>
        <end position="20"/>
    </location>
</feature>
<feature type="chain" id="PRO_0000015184" description="Immunoglobulin kappa variable 5-2" evidence="2">
    <location>
        <begin position="21"/>
        <end position="115"/>
    </location>
</feature>
<feature type="domain" description="Ig-like" evidence="3">
    <location>
        <begin position="22"/>
        <end position="115" status="greater than"/>
    </location>
</feature>
<feature type="region of interest" description="Framework-1" evidence="1">
    <location>
        <begin position="21"/>
        <end position="43"/>
    </location>
</feature>
<feature type="region of interest" description="Complementarity-determining-1" evidence="1">
    <location>
        <begin position="44"/>
        <end position="54"/>
    </location>
</feature>
<feature type="region of interest" description="Framework-2" evidence="1">
    <location>
        <begin position="55"/>
        <end position="69"/>
    </location>
</feature>
<feature type="region of interest" description="Complementarity-determining-2" evidence="1">
    <location>
        <begin position="70"/>
        <end position="76"/>
    </location>
</feature>
<feature type="region of interest" description="Framework-3" evidence="1">
    <location>
        <begin position="77"/>
        <end position="108"/>
    </location>
</feature>
<feature type="region of interest" description="Complementarity-determining-3" evidence="1">
    <location>
        <begin position="109"/>
        <end position="115" status="greater than"/>
    </location>
</feature>
<feature type="modified residue" description="Phosphoserine" evidence="13">
    <location>
        <position position="42"/>
    </location>
</feature>
<feature type="glycosylation site" description="N-linked (GlcNAc...) asparagine" evidence="4">
    <location>
        <position position="40"/>
    </location>
</feature>
<feature type="disulfide bond" evidence="3">
    <location>
        <begin position="43"/>
        <end position="108"/>
    </location>
</feature>
<feature type="non-terminal residue">
    <location>
        <position position="115"/>
    </location>
</feature>
<evidence type="ECO:0000250" key="1">
    <source>
        <dbReference type="UniProtKB" id="P01602"/>
    </source>
</evidence>
<evidence type="ECO:0000255" key="2"/>
<evidence type="ECO:0000255" key="3">
    <source>
        <dbReference type="PROSITE-ProRule" id="PRU00114"/>
    </source>
</evidence>
<evidence type="ECO:0000269" key="4">
    <source>
    </source>
</evidence>
<evidence type="ECO:0000303" key="5">
    <source>
    </source>
</evidence>
<evidence type="ECO:0000303" key="6">
    <source>
    </source>
</evidence>
<evidence type="ECO:0000303" key="7">
    <source>
    </source>
</evidence>
<evidence type="ECO:0000303" key="8">
    <source>
    </source>
</evidence>
<evidence type="ECO:0000303" key="9">
    <source>
    </source>
</evidence>
<evidence type="ECO:0000303" key="10">
    <source ref="4"/>
</evidence>
<evidence type="ECO:0000305" key="11"/>
<evidence type="ECO:0000305" key="12">
    <source>
    </source>
</evidence>
<evidence type="ECO:0007744" key="13">
    <source>
    </source>
</evidence>
<keyword id="KW-1064">Adaptive immunity</keyword>
<keyword id="KW-1003">Cell membrane</keyword>
<keyword id="KW-1015">Disulfide bond</keyword>
<keyword id="KW-0325">Glycoprotein</keyword>
<keyword id="KW-0391">Immunity</keyword>
<keyword id="KW-1280">Immunoglobulin</keyword>
<keyword id="KW-0393">Immunoglobulin domain</keyword>
<keyword id="KW-0472">Membrane</keyword>
<keyword id="KW-0597">Phosphoprotein</keyword>
<keyword id="KW-1267">Proteomics identification</keyword>
<keyword id="KW-1185">Reference proteome</keyword>
<keyword id="KW-0964">Secreted</keyword>
<keyword id="KW-0732">Signal</keyword>
<reference key="1">
    <citation type="journal article" date="1985" name="Nucleic Acids Res.">
        <title>Aberrant recombination events in B cell lines derived from a kappa-deficient human.</title>
        <authorList>
            <person name="Stavnezer J."/>
            <person name="Kekish O."/>
            <person name="Batter D."/>
            <person name="Grenier J."/>
            <person name="Balazs I."/>
            <person name="Henderson E."/>
            <person name="Zegers B.J.M."/>
        </authorList>
    </citation>
    <scope>NUCLEOTIDE SEQUENCE [MRNA] (IMGT ALLELE IGKV5-2*01)</scope>
</reference>
<reference key="2">
    <citation type="journal article" date="2005" name="Nature">
        <title>Generation and annotation of the DNA sequences of human chromosomes 2 and 4.</title>
        <authorList>
            <person name="Hillier L.W."/>
            <person name="Graves T.A."/>
            <person name="Fulton R.S."/>
            <person name="Fulton L.A."/>
            <person name="Pepin K.H."/>
            <person name="Minx P."/>
            <person name="Wagner-McPherson C."/>
            <person name="Layman D."/>
            <person name="Wylie K."/>
            <person name="Sekhon M."/>
            <person name="Becker M.C."/>
            <person name="Fewell G.A."/>
            <person name="Delehaunty K.D."/>
            <person name="Miner T.L."/>
            <person name="Nash W.E."/>
            <person name="Kremitzki C."/>
            <person name="Oddy L."/>
            <person name="Du H."/>
            <person name="Sun H."/>
            <person name="Bradshaw-Cordum H."/>
            <person name="Ali J."/>
            <person name="Carter J."/>
            <person name="Cordes M."/>
            <person name="Harris A."/>
            <person name="Isak A."/>
            <person name="van Brunt A."/>
            <person name="Nguyen C."/>
            <person name="Du F."/>
            <person name="Courtney L."/>
            <person name="Kalicki J."/>
            <person name="Ozersky P."/>
            <person name="Abbott S."/>
            <person name="Armstrong J."/>
            <person name="Belter E.A."/>
            <person name="Caruso L."/>
            <person name="Cedroni M."/>
            <person name="Cotton M."/>
            <person name="Davidson T."/>
            <person name="Desai A."/>
            <person name="Elliott G."/>
            <person name="Erb T."/>
            <person name="Fronick C."/>
            <person name="Gaige T."/>
            <person name="Haakenson W."/>
            <person name="Haglund K."/>
            <person name="Holmes A."/>
            <person name="Harkins R."/>
            <person name="Kim K."/>
            <person name="Kruchowski S.S."/>
            <person name="Strong C.M."/>
            <person name="Grewal N."/>
            <person name="Goyea E."/>
            <person name="Hou S."/>
            <person name="Levy A."/>
            <person name="Martinka S."/>
            <person name="Mead K."/>
            <person name="McLellan M.D."/>
            <person name="Meyer R."/>
            <person name="Randall-Maher J."/>
            <person name="Tomlinson C."/>
            <person name="Dauphin-Kohlberg S."/>
            <person name="Kozlowicz-Reilly A."/>
            <person name="Shah N."/>
            <person name="Swearengen-Shahid S."/>
            <person name="Snider J."/>
            <person name="Strong J.T."/>
            <person name="Thompson J."/>
            <person name="Yoakum M."/>
            <person name="Leonard S."/>
            <person name="Pearman C."/>
            <person name="Trani L."/>
            <person name="Radionenko M."/>
            <person name="Waligorski J.E."/>
            <person name="Wang C."/>
            <person name="Rock S.M."/>
            <person name="Tin-Wollam A.-M."/>
            <person name="Maupin R."/>
            <person name="Latreille P."/>
            <person name="Wendl M.C."/>
            <person name="Yang S.-P."/>
            <person name="Pohl C."/>
            <person name="Wallis J.W."/>
            <person name="Spieth J."/>
            <person name="Bieri T.A."/>
            <person name="Berkowicz N."/>
            <person name="Nelson J.O."/>
            <person name="Osborne J."/>
            <person name="Ding L."/>
            <person name="Meyer R."/>
            <person name="Sabo A."/>
            <person name="Shotland Y."/>
            <person name="Sinha P."/>
            <person name="Wohldmann P.E."/>
            <person name="Cook L.L."/>
            <person name="Hickenbotham M.T."/>
            <person name="Eldred J."/>
            <person name="Williams D."/>
            <person name="Jones T.A."/>
            <person name="She X."/>
            <person name="Ciccarelli F.D."/>
            <person name="Izaurralde E."/>
            <person name="Taylor J."/>
            <person name="Schmutz J."/>
            <person name="Myers R.M."/>
            <person name="Cox D.R."/>
            <person name="Huang X."/>
            <person name="McPherson J.D."/>
            <person name="Mardis E.R."/>
            <person name="Clifton S.W."/>
            <person name="Warren W.C."/>
            <person name="Chinwalla A.T."/>
            <person name="Eddy S.R."/>
            <person name="Marra M.A."/>
            <person name="Ovcharenko I."/>
            <person name="Furey T.S."/>
            <person name="Miller W."/>
            <person name="Eichler E.E."/>
            <person name="Bork P."/>
            <person name="Suyama M."/>
            <person name="Torrents D."/>
            <person name="Waterston R.H."/>
            <person name="Wilson R.K."/>
        </authorList>
    </citation>
    <scope>NUCLEOTIDE SEQUENCE [LARGE SCALE GENOMIC DNA] (IMGT ALLELE IGKV5-2*01)</scope>
</reference>
<reference key="3">
    <citation type="journal article" date="2001" name="Exp. Clin. Immunogenet.">
        <title>Nomenclature of the human immunoglobulin kappa (IGK) genes.</title>
        <authorList>
            <person name="Lefranc M.P."/>
        </authorList>
    </citation>
    <scope>NOMEMCLATURE</scope>
</reference>
<reference key="4">
    <citation type="book" date="2001" name="The Immunoglobulin FactsBook.">
        <title>The Immunoglobulin FactsBook.</title>
        <editorList>
            <person name="Lefranc M.P."/>
            <person name="Lefranc G."/>
        </editorList>
        <authorList>
            <person name="Lefranc M.P."/>
            <person name="Lefranc G."/>
        </authorList>
    </citation>
    <scope>NOMENCLATURE</scope>
</reference>
<reference key="5">
    <citation type="journal article" date="2005" name="J. Proteome Res.">
        <title>Human plasma N-glycoproteome analysis by immunoaffinity subtraction, hydrazide chemistry, and mass spectrometry.</title>
        <authorList>
            <person name="Liu T."/>
            <person name="Qian W.-J."/>
            <person name="Gritsenko M.A."/>
            <person name="Camp D.G. II"/>
            <person name="Monroe M.E."/>
            <person name="Moore R.J."/>
            <person name="Smith R.D."/>
        </authorList>
    </citation>
    <scope>GLYCOSYLATION [LARGE SCALE ANALYSIS] AT ASN-40</scope>
    <source>
        <tissue>Plasma</tissue>
    </source>
</reference>
<reference key="6">
    <citation type="journal article" date="2007" name="Annu. Rev. Genet.">
        <title>Immunoglobulin somatic hypermutation.</title>
        <authorList>
            <person name="Teng G."/>
            <person name="Papavasiliou F.N."/>
        </authorList>
    </citation>
    <scope>REVIEW ON SOMATIC HYPERMUTATION</scope>
</reference>
<reference key="7">
    <citation type="journal article" date="2009" name="Sci. Signal.">
        <title>Quantitative phosphoproteomic analysis of T cell receptor signaling reveals system-wide modulation of protein-protein interactions.</title>
        <authorList>
            <person name="Mayya V."/>
            <person name="Lundgren D.H."/>
            <person name="Hwang S.-I."/>
            <person name="Rezaul K."/>
            <person name="Wu L."/>
            <person name="Eng J.K."/>
            <person name="Rodionov V."/>
            <person name="Han D.K."/>
        </authorList>
    </citation>
    <scope>PHOSPHORYLATION [LARGE SCALE ANALYSIS] AT SER-42</scope>
    <scope>IDENTIFICATION BY MASS SPECTROMETRY [LARGE SCALE ANALYSIS]</scope>
    <source>
        <tissue>Leukemic T-cell</tissue>
    </source>
</reference>
<reference key="8">
    <citation type="journal article" date="2010" name="J. Allergy Clin. Immunol.">
        <title>Structure and function of immunoglobulins.</title>
        <authorList>
            <person name="Schroeder H.W. Jr."/>
            <person name="Cavacini L."/>
        </authorList>
    </citation>
    <scope>REVIEW ON IMMUNOGLOBULINS</scope>
</reference>
<reference key="9">
    <citation type="journal article" date="2012" name="Nat. Rev. Immunol.">
        <title>Molecular programming of B cell memory.</title>
        <authorList>
            <person name="McHeyzer-Williams M."/>
            <person name="Okitsu S."/>
            <person name="Wang N."/>
            <person name="McHeyzer-Williams L."/>
        </authorList>
    </citation>
    <scope>REVIEW ON FUNCTION</scope>
</reference>
<reference key="10">
    <citation type="journal article" date="2014" name="Front. Immunol.">
        <title>Immunoglobulin and T Cell Receptor Genes: IMGT((R)) and the Birth and Rise of Immunoinformatics.</title>
        <authorList>
            <person name="Lefranc M.P."/>
        </authorList>
    </citation>
    <scope>NOMENCLATURE</scope>
</reference>
<organism>
    <name type="scientific">Homo sapiens</name>
    <name type="common">Human</name>
    <dbReference type="NCBI Taxonomy" id="9606"/>
    <lineage>
        <taxon>Eukaryota</taxon>
        <taxon>Metazoa</taxon>
        <taxon>Chordata</taxon>
        <taxon>Craniata</taxon>
        <taxon>Vertebrata</taxon>
        <taxon>Euteleostomi</taxon>
        <taxon>Mammalia</taxon>
        <taxon>Eutheria</taxon>
        <taxon>Euarchontoglires</taxon>
        <taxon>Primates</taxon>
        <taxon>Haplorrhini</taxon>
        <taxon>Catarrhini</taxon>
        <taxon>Hominidae</taxon>
        <taxon>Homo</taxon>
    </lineage>
</organism>
<name>KV502_HUMAN</name>
<protein>
    <recommendedName>
        <fullName evidence="5 10">Immunoglobulin kappa variable 5-2</fullName>
    </recommendedName>
    <alternativeName>
        <fullName evidence="12">Ig kappa chain V region EV15</fullName>
    </alternativeName>
</protein>
<dbReference type="EMBL" id="AC243970">
    <property type="status" value="NOT_ANNOTATED_CDS"/>
    <property type="molecule type" value="Genomic_DNA"/>
</dbReference>
<dbReference type="PIR" id="A01906">
    <property type="entry name" value="K3HU15"/>
</dbReference>
<dbReference type="SMR" id="P06315"/>
<dbReference type="FunCoup" id="P06315">
    <property type="interactions" value="300"/>
</dbReference>
<dbReference type="IMGT_GENE-DB" id="IGKV5-2"/>
<dbReference type="GlyCosmos" id="P06315">
    <property type="glycosylation" value="1 site, No reported glycans"/>
</dbReference>
<dbReference type="GlyGen" id="P06315">
    <property type="glycosylation" value="3 sites"/>
</dbReference>
<dbReference type="iPTMnet" id="P06315"/>
<dbReference type="PhosphoSitePlus" id="P06315"/>
<dbReference type="BioMuta" id="IGKV5-2"/>
<dbReference type="DMDM" id="125835"/>
<dbReference type="MassIVE" id="P06315"/>
<dbReference type="Ensembl" id="ENST00000390244.2">
    <property type="protein sequence ID" value="ENSP00000374779.2"/>
    <property type="gene ID" value="ENSG00000211599.2"/>
</dbReference>
<dbReference type="Ensembl" id="ENST00000632585.1">
    <property type="protein sequence ID" value="ENSP00000487796.1"/>
    <property type="gene ID" value="ENSG00000282172.1"/>
</dbReference>
<dbReference type="UCSC" id="uc061lqj.1">
    <property type="organism name" value="human"/>
</dbReference>
<dbReference type="AGR" id="HGNC:5835"/>
<dbReference type="GeneCards" id="IGKV5-2"/>
<dbReference type="HGNC" id="HGNC:5835">
    <property type="gene designation" value="IGKV5-2"/>
</dbReference>
<dbReference type="HPA" id="ENSG00000211599">
    <property type="expression patterns" value="Tissue enhanced (intestine, lymphoid tissue)"/>
</dbReference>
<dbReference type="neXtProt" id="NX_P06315"/>
<dbReference type="OpenTargets" id="ENSG00000211599"/>
<dbReference type="VEuPathDB" id="HostDB:ENSG00000211599"/>
<dbReference type="GeneTree" id="ENSGT00940000164053"/>
<dbReference type="HOGENOM" id="CLU_077975_4_1_1"/>
<dbReference type="InParanoid" id="P06315"/>
<dbReference type="OMA" id="QWDCLSC"/>
<dbReference type="PAN-GO" id="P06315">
    <property type="GO annotations" value="3 GO annotations based on evolutionary models"/>
</dbReference>
<dbReference type="PhylomeDB" id="P06315"/>
<dbReference type="PathwayCommons" id="P06315"/>
<dbReference type="Reactome" id="R-HSA-166663">
    <property type="pathway name" value="Initial triggering of complement"/>
</dbReference>
<dbReference type="Reactome" id="R-HSA-173623">
    <property type="pathway name" value="Classical antibody-mediated complement activation"/>
</dbReference>
<dbReference type="Reactome" id="R-HSA-198933">
    <property type="pathway name" value="Immunoregulatory interactions between a Lymphoid and a non-Lymphoid cell"/>
</dbReference>
<dbReference type="Reactome" id="R-HSA-202733">
    <property type="pathway name" value="Cell surface interactions at the vascular wall"/>
</dbReference>
<dbReference type="Reactome" id="R-HSA-2029481">
    <property type="pathway name" value="FCGR activation"/>
</dbReference>
<dbReference type="Reactome" id="R-HSA-2029482">
    <property type="pathway name" value="Regulation of actin dynamics for phagocytic cup formation"/>
</dbReference>
<dbReference type="Reactome" id="R-HSA-2029485">
    <property type="pathway name" value="Role of phospholipids in phagocytosis"/>
</dbReference>
<dbReference type="Reactome" id="R-HSA-2168880">
    <property type="pathway name" value="Scavenging of heme from plasma"/>
</dbReference>
<dbReference type="Reactome" id="R-HSA-2454202">
    <property type="pathway name" value="Fc epsilon receptor (FCERI) signaling"/>
</dbReference>
<dbReference type="Reactome" id="R-HSA-2730905">
    <property type="pathway name" value="Role of LAT2/NTAL/LAB on calcium mobilization"/>
</dbReference>
<dbReference type="Reactome" id="R-HSA-2871796">
    <property type="pathway name" value="FCERI mediated MAPK activation"/>
</dbReference>
<dbReference type="Reactome" id="R-HSA-2871809">
    <property type="pathway name" value="FCERI mediated Ca+2 mobilization"/>
</dbReference>
<dbReference type="Reactome" id="R-HSA-2871837">
    <property type="pathway name" value="FCERI mediated NF-kB activation"/>
</dbReference>
<dbReference type="Reactome" id="R-HSA-5690714">
    <property type="pathway name" value="CD22 mediated BCR regulation"/>
</dbReference>
<dbReference type="Reactome" id="R-HSA-9664323">
    <property type="pathway name" value="FCGR3A-mediated IL10 synthesis"/>
</dbReference>
<dbReference type="Reactome" id="R-HSA-9664422">
    <property type="pathway name" value="FCGR3A-mediated phagocytosis"/>
</dbReference>
<dbReference type="Reactome" id="R-HSA-9679191">
    <property type="pathway name" value="Potential therapeutics for SARS"/>
</dbReference>
<dbReference type="Reactome" id="R-HSA-977606">
    <property type="pathway name" value="Regulation of Complement cascade"/>
</dbReference>
<dbReference type="Reactome" id="R-HSA-983695">
    <property type="pathway name" value="Antigen activates B Cell Receptor (BCR) leading to generation of second messengers"/>
</dbReference>
<dbReference type="SignaLink" id="P06315"/>
<dbReference type="ChiTaRS" id="IGKV5-2">
    <property type="organism name" value="human"/>
</dbReference>
<dbReference type="Pharos" id="P06315">
    <property type="development level" value="Tdark"/>
</dbReference>
<dbReference type="PRO" id="PR:P06315"/>
<dbReference type="Proteomes" id="UP000005640">
    <property type="component" value="Chromosome 2"/>
</dbReference>
<dbReference type="RNAct" id="P06315">
    <property type="molecule type" value="protein"/>
</dbReference>
<dbReference type="Bgee" id="ENSG00000211599">
    <property type="expression patterns" value="Expressed in lymph node and 73 other cell types or tissues"/>
</dbReference>
<dbReference type="GO" id="GO:0005576">
    <property type="term" value="C:extracellular region"/>
    <property type="evidence" value="ECO:0000304"/>
    <property type="project" value="Reactome"/>
</dbReference>
<dbReference type="GO" id="GO:0019814">
    <property type="term" value="C:immunoglobulin complex"/>
    <property type="evidence" value="ECO:0000318"/>
    <property type="project" value="GO_Central"/>
</dbReference>
<dbReference type="GO" id="GO:0005886">
    <property type="term" value="C:plasma membrane"/>
    <property type="evidence" value="ECO:0000304"/>
    <property type="project" value="Reactome"/>
</dbReference>
<dbReference type="GO" id="GO:0003823">
    <property type="term" value="F:antigen binding"/>
    <property type="evidence" value="ECO:0000303"/>
    <property type="project" value="UniProtKB"/>
</dbReference>
<dbReference type="GO" id="GO:0002250">
    <property type="term" value="P:adaptive immune response"/>
    <property type="evidence" value="ECO:0007669"/>
    <property type="project" value="UniProtKB-KW"/>
</dbReference>
<dbReference type="GO" id="GO:0006955">
    <property type="term" value="P:immune response"/>
    <property type="evidence" value="ECO:0000318"/>
    <property type="project" value="GO_Central"/>
</dbReference>
<dbReference type="FunFam" id="2.60.40.10:FF:002314">
    <property type="entry name" value="Immunoglobulin kappa variable 5-2"/>
    <property type="match status" value="1"/>
</dbReference>
<dbReference type="Gene3D" id="2.60.40.10">
    <property type="entry name" value="Immunoglobulins"/>
    <property type="match status" value="1"/>
</dbReference>
<dbReference type="InterPro" id="IPR007110">
    <property type="entry name" value="Ig-like_dom"/>
</dbReference>
<dbReference type="InterPro" id="IPR036179">
    <property type="entry name" value="Ig-like_dom_sf"/>
</dbReference>
<dbReference type="InterPro" id="IPR013783">
    <property type="entry name" value="Ig-like_fold"/>
</dbReference>
<dbReference type="InterPro" id="IPR013106">
    <property type="entry name" value="Ig_V-set"/>
</dbReference>
<dbReference type="InterPro" id="IPR050150">
    <property type="entry name" value="IgV_Light_Chain"/>
</dbReference>
<dbReference type="PANTHER" id="PTHR23267">
    <property type="entry name" value="IMMUNOGLOBULIN LIGHT CHAIN"/>
    <property type="match status" value="1"/>
</dbReference>
<dbReference type="Pfam" id="PF07686">
    <property type="entry name" value="V-set"/>
    <property type="match status" value="1"/>
</dbReference>
<dbReference type="SMART" id="SM00406">
    <property type="entry name" value="IGv"/>
    <property type="match status" value="1"/>
</dbReference>
<dbReference type="SUPFAM" id="SSF48726">
    <property type="entry name" value="Immunoglobulin"/>
    <property type="match status" value="1"/>
</dbReference>
<dbReference type="PROSITE" id="PS50835">
    <property type="entry name" value="IG_LIKE"/>
    <property type="match status" value="1"/>
</dbReference>
<accession>P06315</accession>
<proteinExistence type="evidence at protein level"/>
<comment type="function">
    <text evidence="6 7 8 9">V region of the variable domain of immunoglobulin light chains that participates in the antigen recognition (PubMed:24600447). Immunoglobulins, also known as antibodies, are membrane-bound or secreted glycoproteins produced by B lymphocytes. In the recognition phase of humoral immunity, the membrane-bound immunoglobulins serve as receptors which, upon binding of a specific antigen, trigger the clonal expansion and differentiation of B lymphocytes into immunoglobulins-secreting plasma cells. Secreted immunoglobulins mediate the effector phase of humoral immunity, which results in the elimination of bound antigens (PubMed:20176268, PubMed:22158414). The antigen binding site is formed by the variable domain of one heavy chain, together with that of its associated light chain. Thus, each immunoglobulin has two antigen binding sites with remarkable affinity for a particular antigen. The variable domains are assembled by a process called V-(D)-J rearrangement and can then be subjected to somatic hypermutations which, after exposure to antigen and selection, allow affinity maturation for a particular antigen (PubMed:17576170, PubMed:20176268).</text>
</comment>
<comment type="subunit">
    <text evidence="7">Immunoglobulins are composed of two identical heavy chains and two identical light chains; disulfide-linked.</text>
</comment>
<comment type="subcellular location">
    <subcellularLocation>
        <location evidence="7 8">Secreted</location>
    </subcellularLocation>
    <subcellularLocation>
        <location evidence="7 8">Cell membrane</location>
    </subcellularLocation>
</comment>
<comment type="polymorphism">
    <text>There are several alleles. The sequence shown is that of IMGT allele IGKV5-2*01.</text>
</comment>
<comment type="caution">
    <text evidence="11">For an example of a full-length immunoglobulin kappa light chain see AC P0DOX7.</text>
</comment>